<dbReference type="EMBL" id="V00140">
    <property type="protein sequence ID" value="CAA23452.1"/>
    <property type="molecule type" value="Genomic_DNA"/>
</dbReference>
<dbReference type="Proteomes" id="UP000008438">
    <property type="component" value="Genome"/>
</dbReference>
<dbReference type="GO" id="GO:0044219">
    <property type="term" value="C:host cell plasmodesma"/>
    <property type="evidence" value="ECO:0007669"/>
    <property type="project" value="UniProtKB-SubCell"/>
</dbReference>
<dbReference type="GO" id="GO:0046740">
    <property type="term" value="P:transport of virus in host, cell to cell"/>
    <property type="evidence" value="ECO:0007669"/>
    <property type="project" value="UniProtKB-KW"/>
</dbReference>
<dbReference type="InterPro" id="IPR051596">
    <property type="entry name" value="Caulimoviridae_Movement"/>
</dbReference>
<dbReference type="InterPro" id="IPR028919">
    <property type="entry name" value="Viral_movement"/>
</dbReference>
<dbReference type="PANTHER" id="PTHR47599">
    <property type="entry name" value="CELL-TO-CELL MOVEMENT PROTEIN"/>
    <property type="match status" value="1"/>
</dbReference>
<dbReference type="PANTHER" id="PTHR47599:SF3">
    <property type="entry name" value="CELL-TO-CELL MOVEMENT PROTEIN"/>
    <property type="match status" value="1"/>
</dbReference>
<dbReference type="Pfam" id="PF01107">
    <property type="entry name" value="MP"/>
    <property type="match status" value="1"/>
</dbReference>
<reference key="1">
    <citation type="journal article" date="1981" name="Nucleic Acids Res.">
        <title>The complete nucleotide sequence of an infectious clone of cauliflower mosaic virus by M13mp7 shotgun sequencing.</title>
        <authorList>
            <person name="Gardner R.C."/>
            <person name="Howarth A.J."/>
            <person name="Hahn P."/>
            <person name="Brown-Luedi M."/>
            <person name="Shepherd R.J."/>
            <person name="Messing J."/>
        </authorList>
    </citation>
    <scope>NUCLEOTIDE SEQUENCE [GENOMIC DNA]</scope>
</reference>
<reference key="2">
    <citation type="journal article" date="2001" name="Plant Mol. Biol.">
        <title>Identification of arabidopsis proteins that interact with the cauliflower mosaic virus (CaMV) movement protein.</title>
        <authorList>
            <person name="Huang Z."/>
            <person name="Andrianov V.M."/>
            <person name="Han Y."/>
            <person name="Howell S.H."/>
        </authorList>
    </citation>
    <scope>INTERACTION WITH HOST PRA1D</scope>
</reference>
<organism>
    <name type="scientific">Cauliflower mosaic virus (strain CM-1841)</name>
    <name type="common">CaMV</name>
    <dbReference type="NCBI Taxonomy" id="10644"/>
    <lineage>
        <taxon>Viruses</taxon>
        <taxon>Riboviria</taxon>
        <taxon>Pararnavirae</taxon>
        <taxon>Artverviricota</taxon>
        <taxon>Revtraviricetes</taxon>
        <taxon>Ortervirales</taxon>
        <taxon>Caulimoviridae</taxon>
        <taxon>Caulimovirus</taxon>
        <taxon>Caulimovirus tessellobrassicae</taxon>
    </lineage>
</organism>
<feature type="chain" id="PRO_0000222058" description="Movement protein">
    <location>
        <begin position="1"/>
        <end position="327"/>
    </location>
</feature>
<feature type="coiled-coil region" evidence="1">
    <location>
        <begin position="297"/>
        <end position="327"/>
    </location>
</feature>
<protein>
    <recommendedName>
        <fullName>Movement protein</fullName>
        <shortName>Mov</shortName>
    </recommendedName>
    <alternativeName>
        <fullName>Cell-to-cell transport protein</fullName>
    </alternativeName>
</protein>
<evidence type="ECO:0000250" key="1"/>
<evidence type="ECO:0000269" key="2">
    <source>
    </source>
</evidence>
<evidence type="ECO:0000305" key="3"/>
<keyword id="KW-0175">Coiled coil</keyword>
<keyword id="KW-1031">Host cell junction</keyword>
<keyword id="KW-0945">Host-virus interaction</keyword>
<keyword id="KW-0813">Transport</keyword>
<keyword id="KW-0916">Viral movement protein</keyword>
<gene>
    <name type="ORF">ORF I</name>
</gene>
<organismHost>
    <name type="scientific">Arabidopsis thaliana</name>
    <name type="common">Mouse-ear cress</name>
    <dbReference type="NCBI Taxonomy" id="3702"/>
</organismHost>
<organismHost>
    <name type="scientific">Brassica</name>
    <dbReference type="NCBI Taxonomy" id="3705"/>
</organismHost>
<organismHost>
    <name type="scientific">Raphanus</name>
    <dbReference type="NCBI Taxonomy" id="3725"/>
</organismHost>
<accession>P03546</accession>
<comment type="function">
    <text evidence="1">Transports viral genome to neighboring plant cells directly through plasmosdesmata, without any budding. The movement protein allows efficient cell to cell propagation, by bypassing the host cell wall barrier. Acts by forming tubules structures that increase the size exclusion limit (SEL) of plasmodesmata, thereby allowing viral ribonucleocapsids to spread directly to neighboring cells (By similarity).</text>
</comment>
<comment type="subunit">
    <text evidence="1 2">Homotrimer, through the coiled-coil domain (By similarity). Interacts with VAP (By similarity). May interact (via N-terminus) with host prenylated Rab acceptor protein 1D (PRA1D).</text>
</comment>
<comment type="subcellular location">
    <subcellularLocation>
        <location>Host cell junction</location>
        <location>Host plasmodesma</location>
    </subcellularLocation>
    <text>Assembles in tubules that are embedded within modified plasmodesmata.</text>
</comment>
<comment type="similarity">
    <text evidence="3">Belongs to the caulimoviridae movement protein family.</text>
</comment>
<name>MVP_CAMVC</name>
<sequence>MDLYPEENTQSEQSQNSENNMQIFKSENSDGFSSDLMISNDQLKNISKTQLTLEKEKIFKMPNVLSQVMKKAFSRKNEILYCVSTKELSVDIHDATGKVYLPLITREEINKRLSSLKPEVRKIMSMVHLGAVKILLKAQFRNGIDTPIKIALIDDRINSRRDCLLGAAKGNLAYGKFMFTVYPKFGISLNTQRLNQTLSLIHDFENKNLMNKGDKVMTITYIVGYALTNSHHSIDYQSNATIELEDVFQEIGNVQQSDFCTIQNDECNWAIDIAQNKALLGAKTQSQIGNSLQIGNSASSSNTENELARVSQNIDLLKNKLKEICGE</sequence>
<proteinExistence type="evidence at protein level"/>